<dbReference type="EMBL" id="AE013218">
    <property type="protein sequence ID" value="AAM67891.1"/>
    <property type="molecule type" value="Genomic_DNA"/>
</dbReference>
<dbReference type="RefSeq" id="WP_011053858.1">
    <property type="nucleotide sequence ID" value="NC_004061.1"/>
</dbReference>
<dbReference type="SMR" id="Q8K9J7"/>
<dbReference type="STRING" id="198804.BUsg_337"/>
<dbReference type="GeneID" id="93003808"/>
<dbReference type="KEGG" id="bas:BUsg_337"/>
<dbReference type="eggNOG" id="COG0333">
    <property type="taxonomic scope" value="Bacteria"/>
</dbReference>
<dbReference type="HOGENOM" id="CLU_129084_2_1_6"/>
<dbReference type="Proteomes" id="UP000000416">
    <property type="component" value="Chromosome"/>
</dbReference>
<dbReference type="GO" id="GO:0015934">
    <property type="term" value="C:large ribosomal subunit"/>
    <property type="evidence" value="ECO:0007669"/>
    <property type="project" value="InterPro"/>
</dbReference>
<dbReference type="GO" id="GO:0003735">
    <property type="term" value="F:structural constituent of ribosome"/>
    <property type="evidence" value="ECO:0007669"/>
    <property type="project" value="InterPro"/>
</dbReference>
<dbReference type="GO" id="GO:0006412">
    <property type="term" value="P:translation"/>
    <property type="evidence" value="ECO:0007669"/>
    <property type="project" value="UniProtKB-UniRule"/>
</dbReference>
<dbReference type="HAMAP" id="MF_00340">
    <property type="entry name" value="Ribosomal_bL32"/>
    <property type="match status" value="1"/>
</dbReference>
<dbReference type="InterPro" id="IPR002677">
    <property type="entry name" value="Ribosomal_bL32"/>
</dbReference>
<dbReference type="InterPro" id="IPR044957">
    <property type="entry name" value="Ribosomal_bL32_bact"/>
</dbReference>
<dbReference type="InterPro" id="IPR011332">
    <property type="entry name" value="Ribosomal_zn-bd"/>
</dbReference>
<dbReference type="NCBIfam" id="TIGR01031">
    <property type="entry name" value="rpmF_bact"/>
    <property type="match status" value="1"/>
</dbReference>
<dbReference type="PANTHER" id="PTHR35534">
    <property type="entry name" value="50S RIBOSOMAL PROTEIN L32"/>
    <property type="match status" value="1"/>
</dbReference>
<dbReference type="PANTHER" id="PTHR35534:SF1">
    <property type="entry name" value="LARGE RIBOSOMAL SUBUNIT PROTEIN BL32"/>
    <property type="match status" value="1"/>
</dbReference>
<dbReference type="Pfam" id="PF01783">
    <property type="entry name" value="Ribosomal_L32p"/>
    <property type="match status" value="1"/>
</dbReference>
<dbReference type="SUPFAM" id="SSF57829">
    <property type="entry name" value="Zn-binding ribosomal proteins"/>
    <property type="match status" value="1"/>
</dbReference>
<accession>Q8K9J7</accession>
<proteinExistence type="inferred from homology"/>
<comment type="similarity">
    <text evidence="2">Belongs to the bacterial ribosomal protein bL32 family.</text>
</comment>
<name>RL32_BUCAP</name>
<evidence type="ECO:0000250" key="1"/>
<evidence type="ECO:0000255" key="2">
    <source>
        <dbReference type="HAMAP-Rule" id="MF_00340"/>
    </source>
</evidence>
<evidence type="ECO:0000256" key="3">
    <source>
        <dbReference type="SAM" id="MobiDB-lite"/>
    </source>
</evidence>
<evidence type="ECO:0000305" key="4"/>
<organism>
    <name type="scientific">Buchnera aphidicola subsp. Schizaphis graminum (strain Sg)</name>
    <dbReference type="NCBI Taxonomy" id="198804"/>
    <lineage>
        <taxon>Bacteria</taxon>
        <taxon>Pseudomonadati</taxon>
        <taxon>Pseudomonadota</taxon>
        <taxon>Gammaproteobacteria</taxon>
        <taxon>Enterobacterales</taxon>
        <taxon>Erwiniaceae</taxon>
        <taxon>Buchnera</taxon>
    </lineage>
</organism>
<keyword id="KW-0687">Ribonucleoprotein</keyword>
<keyword id="KW-0689">Ribosomal protein</keyword>
<reference key="1">
    <citation type="journal article" date="2002" name="Science">
        <title>50 million years of genomic stasis in endosymbiotic bacteria.</title>
        <authorList>
            <person name="Tamas I."/>
            <person name="Klasson L."/>
            <person name="Canbaeck B."/>
            <person name="Naeslund A.K."/>
            <person name="Eriksson A.-S."/>
            <person name="Wernegreen J.J."/>
            <person name="Sandstroem J.P."/>
            <person name="Moran N.A."/>
            <person name="Andersson S.G.E."/>
        </authorList>
    </citation>
    <scope>NUCLEOTIDE SEQUENCE [LARGE SCALE GENOMIC DNA]</scope>
    <source>
        <strain>Sg</strain>
    </source>
</reference>
<protein>
    <recommendedName>
        <fullName evidence="2">Large ribosomal subunit protein bL32</fullName>
    </recommendedName>
    <alternativeName>
        <fullName evidence="4">50S ribosomal protein L32</fullName>
    </alternativeName>
</protein>
<sequence length="54" mass="6311">MAVQKSKPTRSKRGMRRSHDSLKEITLSKDKFSGEMHIRHHITAKGYYRGKKVI</sequence>
<gene>
    <name evidence="2" type="primary">rpmF</name>
    <name type="ordered locus">BUsg_337</name>
</gene>
<feature type="initiator methionine" description="Removed" evidence="1">
    <location>
        <position position="1"/>
    </location>
</feature>
<feature type="chain" id="PRO_0000172320" description="Large ribosomal subunit protein bL32">
    <location>
        <begin position="2"/>
        <end position="54"/>
    </location>
</feature>
<feature type="region of interest" description="Disordered" evidence="3">
    <location>
        <begin position="1"/>
        <end position="24"/>
    </location>
</feature>
<feature type="compositionally biased region" description="Basic residues" evidence="3">
    <location>
        <begin position="7"/>
        <end position="16"/>
    </location>
</feature>